<comment type="function">
    <text evidence="1">Involved in the oxidation of myo-inositol (MI) to 2-keto-myo-inositol (2KMI or 2-inosose).</text>
</comment>
<comment type="catalytic activity">
    <reaction evidence="1">
        <text>myo-inositol + NAD(+) = scyllo-inosose + NADH + H(+)</text>
        <dbReference type="Rhea" id="RHEA:16949"/>
        <dbReference type="ChEBI" id="CHEBI:15378"/>
        <dbReference type="ChEBI" id="CHEBI:17268"/>
        <dbReference type="ChEBI" id="CHEBI:17811"/>
        <dbReference type="ChEBI" id="CHEBI:57540"/>
        <dbReference type="ChEBI" id="CHEBI:57945"/>
        <dbReference type="EC" id="1.1.1.18"/>
    </reaction>
</comment>
<comment type="subunit">
    <text evidence="1">Homotetramer.</text>
</comment>
<comment type="similarity">
    <text evidence="1">Belongs to the Gfo/Idh/MocA family.</text>
</comment>
<keyword id="KW-0520">NAD</keyword>
<keyword id="KW-0560">Oxidoreductase</keyword>
<accession>A9N564</accession>
<reference key="1">
    <citation type="submission" date="2007-11" db="EMBL/GenBank/DDBJ databases">
        <authorList>
            <consortium name="The Salmonella enterica serovar Paratyphi B Genome Sequencing Project"/>
            <person name="McClelland M."/>
            <person name="Sanderson E.K."/>
            <person name="Porwollik S."/>
            <person name="Spieth J."/>
            <person name="Clifton W.S."/>
            <person name="Fulton R."/>
            <person name="Cordes M."/>
            <person name="Wollam A."/>
            <person name="Shah N."/>
            <person name="Pepin K."/>
            <person name="Bhonagiri V."/>
            <person name="Nash W."/>
            <person name="Johnson M."/>
            <person name="Thiruvilangam P."/>
            <person name="Wilson R."/>
        </authorList>
    </citation>
    <scope>NUCLEOTIDE SEQUENCE [LARGE SCALE GENOMIC DNA]</scope>
    <source>
        <strain>ATCC BAA-1250 / SPB7</strain>
    </source>
</reference>
<name>IOLG_SALPB</name>
<organism>
    <name type="scientific">Salmonella paratyphi B (strain ATCC BAA-1250 / SPB7)</name>
    <dbReference type="NCBI Taxonomy" id="1016998"/>
    <lineage>
        <taxon>Bacteria</taxon>
        <taxon>Pseudomonadati</taxon>
        <taxon>Pseudomonadota</taxon>
        <taxon>Gammaproteobacteria</taxon>
        <taxon>Enterobacterales</taxon>
        <taxon>Enterobacteriaceae</taxon>
        <taxon>Salmonella</taxon>
    </lineage>
</organism>
<proteinExistence type="inferred from homology"/>
<dbReference type="EC" id="1.1.1.18" evidence="1"/>
<dbReference type="EMBL" id="CP000886">
    <property type="protein sequence ID" value="ABX70841.1"/>
    <property type="molecule type" value="Genomic_DNA"/>
</dbReference>
<dbReference type="SMR" id="A9N564"/>
<dbReference type="KEGG" id="spq:SPAB_05572"/>
<dbReference type="PATRIC" id="fig|1016998.12.peg.5223"/>
<dbReference type="HOGENOM" id="CLU_023194_0_1_6"/>
<dbReference type="BioCyc" id="SENT1016998:SPAB_RS22745-MONOMER"/>
<dbReference type="Proteomes" id="UP000008556">
    <property type="component" value="Chromosome"/>
</dbReference>
<dbReference type="GO" id="GO:0050112">
    <property type="term" value="F:inositol 2-dehydrogenase (NAD+) activity"/>
    <property type="evidence" value="ECO:0007669"/>
    <property type="project" value="UniProtKB-UniRule"/>
</dbReference>
<dbReference type="GO" id="GO:0000166">
    <property type="term" value="F:nucleotide binding"/>
    <property type="evidence" value="ECO:0007669"/>
    <property type="project" value="InterPro"/>
</dbReference>
<dbReference type="GO" id="GO:0019310">
    <property type="term" value="P:inositol catabolic process"/>
    <property type="evidence" value="ECO:0007669"/>
    <property type="project" value="UniProtKB-UniRule"/>
</dbReference>
<dbReference type="Gene3D" id="3.30.360.10">
    <property type="entry name" value="Dihydrodipicolinate Reductase, domain 2"/>
    <property type="match status" value="1"/>
</dbReference>
<dbReference type="Gene3D" id="3.40.50.720">
    <property type="entry name" value="NAD(P)-binding Rossmann-like Domain"/>
    <property type="match status" value="1"/>
</dbReference>
<dbReference type="HAMAP" id="MF_01671">
    <property type="entry name" value="IolG"/>
    <property type="match status" value="1"/>
</dbReference>
<dbReference type="InterPro" id="IPR050424">
    <property type="entry name" value="Gfo-Idh-MocA_inositol_DH"/>
</dbReference>
<dbReference type="InterPro" id="IPR004104">
    <property type="entry name" value="Gfo/Idh/MocA-like_OxRdtase_C"/>
</dbReference>
<dbReference type="InterPro" id="IPR000683">
    <property type="entry name" value="Gfo/Idh/MocA-like_OxRdtase_N"/>
</dbReference>
<dbReference type="InterPro" id="IPR023794">
    <property type="entry name" value="MI/DCI_dehydrogenase"/>
</dbReference>
<dbReference type="InterPro" id="IPR036291">
    <property type="entry name" value="NAD(P)-bd_dom_sf"/>
</dbReference>
<dbReference type="PANTHER" id="PTHR43593">
    <property type="match status" value="1"/>
</dbReference>
<dbReference type="PANTHER" id="PTHR43593:SF1">
    <property type="entry name" value="INOSITOL 2-DEHYDROGENASE"/>
    <property type="match status" value="1"/>
</dbReference>
<dbReference type="Pfam" id="PF01408">
    <property type="entry name" value="GFO_IDH_MocA"/>
    <property type="match status" value="1"/>
</dbReference>
<dbReference type="Pfam" id="PF02894">
    <property type="entry name" value="GFO_IDH_MocA_C"/>
    <property type="match status" value="1"/>
</dbReference>
<dbReference type="SUPFAM" id="SSF55347">
    <property type="entry name" value="Glyceraldehyde-3-phosphate dehydrogenase-like, C-terminal domain"/>
    <property type="match status" value="1"/>
</dbReference>
<dbReference type="SUPFAM" id="SSF51735">
    <property type="entry name" value="NAD(P)-binding Rossmann-fold domains"/>
    <property type="match status" value="1"/>
</dbReference>
<feature type="chain" id="PRO_0000352594" description="Inositol 2-dehydrogenase">
    <location>
        <begin position="1"/>
        <end position="336"/>
    </location>
</feature>
<protein>
    <recommendedName>
        <fullName evidence="1">Inositol 2-dehydrogenase</fullName>
        <ecNumber evidence="1">1.1.1.18</ecNumber>
    </recommendedName>
    <alternativeName>
        <fullName evidence="1">Myo-inositol 2-dehydrogenase</fullName>
        <shortName evidence="1">MI 2-dehydrogenase</shortName>
    </alternativeName>
</protein>
<gene>
    <name evidence="1" type="primary">iolG</name>
    <name type="ordered locus">SPAB_05572</name>
</gene>
<sequence>MTLKAGIVGIGMIGSDHLRRLANTVSGVEVVAVCDIVAGRAQAALDKYAIEAKDYNDYHDLINDKDVEVVIITASNEAHADVAVAALNANKYVFCEKPLAVTAADCQRVIEAEQKNGKRMVQIGFMRRYDKGYVQLKNIIDSGEIGQPLMVHGRHYNASTVPEYKTPQAIYETLIHEIDVMHWLLNEDYKTVKVYFPRQSSLVTTLRDPQLVVMETTSGINIVVEVFVNCQYGYDIHCDVTGEKGMAELPTVASAAVRKAAKYSTDILVDWKQRFIDAYDIEFQDFFDRLNAGLPPAGPTSWDGYLAAVTADACVKSQETGNTEIVELPSKPDFYK</sequence>
<evidence type="ECO:0000255" key="1">
    <source>
        <dbReference type="HAMAP-Rule" id="MF_01671"/>
    </source>
</evidence>